<accession>P76136</accession>
<accession>B2D6K4</accession>
<reference key="1">
    <citation type="journal article" date="1997" name="Science">
        <title>The complete genome sequence of Escherichia coli K-12.</title>
        <authorList>
            <person name="Blattner F.R."/>
            <person name="Plunkett G. III"/>
            <person name="Bloch C.A."/>
            <person name="Perna N.T."/>
            <person name="Burland V."/>
            <person name="Riley M."/>
            <person name="Collado-Vides J."/>
            <person name="Glasner J.D."/>
            <person name="Rode C.K."/>
            <person name="Mayhew G.F."/>
            <person name="Gregor J."/>
            <person name="Davis N.W."/>
            <person name="Kirkpatrick H.A."/>
            <person name="Goeden M.A."/>
            <person name="Rose D.J."/>
            <person name="Mau B."/>
            <person name="Shao Y."/>
        </authorList>
    </citation>
    <scope>NUCLEOTIDE SEQUENCE [LARGE SCALE GENOMIC DNA]</scope>
    <source>
        <strain>K12 / MG1655 / ATCC 47076</strain>
    </source>
</reference>
<reference key="2">
    <citation type="journal article" date="2006" name="Mol. Syst. Biol.">
        <title>Highly accurate genome sequences of Escherichia coli K-12 strains MG1655 and W3110.</title>
        <authorList>
            <person name="Hayashi K."/>
            <person name="Morooka N."/>
            <person name="Yamamoto Y."/>
            <person name="Fujita K."/>
            <person name="Isono K."/>
            <person name="Choi S."/>
            <person name="Ohtsubo E."/>
            <person name="Baba T."/>
            <person name="Wanner B.L."/>
            <person name="Mori H."/>
            <person name="Horiuchi T."/>
        </authorList>
    </citation>
    <scope>NUCLEOTIDE SEQUENCE [LARGE SCALE GENOMIC DNA]</scope>
    <source>
        <strain>K12 / W3110 / ATCC 27325 / DSM 5911</strain>
    </source>
</reference>
<reference key="3">
    <citation type="journal article" date="2003" name="Mol. Microbiol.">
        <title>Regulatory network of acid resistance genes in Escherichia coli.</title>
        <authorList>
            <person name="Masuda N."/>
            <person name="Church G.M."/>
        </authorList>
    </citation>
    <scope>INDUCTION BY ACID STRESS</scope>
    <source>
        <strain>K12 / MG1655 / ATCC 47076</strain>
    </source>
</reference>
<reference key="4">
    <citation type="journal article" date="2007" name="Proc. Natl. Acad. Sci. U.S.A.">
        <title>B1500, a small membrane protein, connects the two-component systems EvgS/EvgA and PhoQ/PhoP in Escherichia coli.</title>
        <authorList>
            <person name="Eguchi Y."/>
            <person name="Itou J."/>
            <person name="Yamane M."/>
            <person name="Demizu R."/>
            <person name="Yamato F."/>
            <person name="Okada A."/>
            <person name="Mori H."/>
            <person name="Kato A."/>
            <person name="Utsumi R."/>
        </authorList>
    </citation>
    <scope>FUNCTION IN RESPONSE TO ACID STRESS</scope>
    <scope>SUBCELLULAR LOCATION</scope>
    <scope>TOPOLOGY</scope>
    <scope>INTERACTION WITH PHOQ</scope>
    <source>
        <strain>K12 / MG1655 / ATCC 47076</strain>
    </source>
</reference>
<reference key="5">
    <citation type="journal article" date="2009" name="Biosci. Biotechnol. Biochem.">
        <title>Molecular mechanism of transcriptional cascade initiated by the EvgS/EvgA system in Escherichia coli K-12.</title>
        <authorList>
            <person name="Itou J."/>
            <person name="Eguchi Y."/>
            <person name="Utsumi R."/>
        </authorList>
    </citation>
    <scope>INDUCTION</scope>
    <scope>GENE NAME</scope>
    <source>
        <strain>K12 / MG1655 / ATCC 47076</strain>
    </source>
</reference>
<protein>
    <recommendedName>
        <fullName>Two-component-system connector protein SafA</fullName>
    </recommendedName>
    <alternativeName>
        <fullName>Regulatory protein b1500</fullName>
    </alternativeName>
    <alternativeName>
        <fullName>Sensor associating factor A</fullName>
    </alternativeName>
</protein>
<evidence type="ECO:0000255" key="1"/>
<evidence type="ECO:0000269" key="2">
    <source>
    </source>
</evidence>
<evidence type="ECO:0000269" key="3">
    <source>
    </source>
</evidence>
<evidence type="ECO:0000269" key="4">
    <source>
    </source>
</evidence>
<evidence type="ECO:0000305" key="5"/>
<gene>
    <name type="primary">safA</name>
    <name type="synonym">yneN</name>
    <name type="ordered locus">b1500</name>
    <name type="ordered locus">JW1494.1</name>
</gene>
<keyword id="KW-0997">Cell inner membrane</keyword>
<keyword id="KW-1003">Cell membrane</keyword>
<keyword id="KW-0472">Membrane</keyword>
<keyword id="KW-1185">Reference proteome</keyword>
<keyword id="KW-0735">Signal-anchor</keyword>
<keyword id="KW-0346">Stress response</keyword>
<keyword id="KW-0812">Transmembrane</keyword>
<keyword id="KW-1133">Transmembrane helix</keyword>
<feature type="chain" id="PRO_0000223715" description="Two-component-system connector protein SafA">
    <location>
        <begin position="1"/>
        <end position="65"/>
    </location>
</feature>
<feature type="topological domain" description="Cytoplasmic" evidence="3">
    <location>
        <begin position="1"/>
        <end position="18"/>
    </location>
</feature>
<feature type="transmembrane region" description="Helical; Signal-anchor for type II membrane protein" evidence="1">
    <location>
        <begin position="19"/>
        <end position="39"/>
    </location>
</feature>
<feature type="topological domain" description="Periplasmic" evidence="3">
    <location>
        <begin position="40"/>
        <end position="65"/>
    </location>
</feature>
<sequence>MHATTVKNKITQRDNYKEIMSAIVVVLLLTLTLIAIFSAIDQLSISEMGRIARDLTHFIINSLQG</sequence>
<comment type="function">
    <text evidence="3">Connects the signal transduction between the two-component systems EvgS/EvgA and PhoQ/PhoP, by directly interacting with PhoQ and thus activating the PhoQ/PhoP system, in response to acid stress conditions.</text>
</comment>
<comment type="subunit">
    <text evidence="3">Interacts with PhoQ.</text>
</comment>
<comment type="subcellular location">
    <subcellularLocation>
        <location evidence="3">Cell inner membrane</location>
        <topology evidence="3">Single-pass type II membrane protein</topology>
    </subcellularLocation>
</comment>
<comment type="induction">
    <text evidence="2 4">By acid stress, via the EvgS/EvgA system.</text>
</comment>
<comment type="similarity">
    <text evidence="5">Belongs to the SafA family.</text>
</comment>
<dbReference type="EMBL" id="U00096">
    <property type="protein sequence ID" value="AAC74573.1"/>
    <property type="molecule type" value="Genomic_DNA"/>
</dbReference>
<dbReference type="EMBL" id="AP009048">
    <property type="status" value="NOT_ANNOTATED_CDS"/>
    <property type="molecule type" value="Genomic_DNA"/>
</dbReference>
<dbReference type="PIR" id="G64903">
    <property type="entry name" value="G64903"/>
</dbReference>
<dbReference type="RefSeq" id="NP_416017.1">
    <property type="nucleotide sequence ID" value="NC_000913.3"/>
</dbReference>
<dbReference type="RefSeq" id="WP_000543384.1">
    <property type="nucleotide sequence ID" value="NZ_SSZK01000001.1"/>
</dbReference>
<dbReference type="SMR" id="P76136"/>
<dbReference type="DIP" id="DIP-46181N"/>
<dbReference type="FunCoup" id="P76136">
    <property type="interactions" value="171"/>
</dbReference>
<dbReference type="IntAct" id="P76136">
    <property type="interactions" value="1"/>
</dbReference>
<dbReference type="STRING" id="511145.b1500"/>
<dbReference type="PaxDb" id="511145-b1500"/>
<dbReference type="EnsemblBacteria" id="AAC74573">
    <property type="protein sequence ID" value="AAC74573"/>
    <property type="gene ID" value="b1500"/>
</dbReference>
<dbReference type="GeneID" id="946061"/>
<dbReference type="KEGG" id="eco:b1500"/>
<dbReference type="KEGG" id="ecoc:C3026_08685"/>
<dbReference type="PATRIC" id="fig|1411691.4.peg.766"/>
<dbReference type="InParanoid" id="P76136"/>
<dbReference type="OMA" id="YKGIMSV"/>
<dbReference type="BioCyc" id="EcoCyc:MONOMER0-2841"/>
<dbReference type="PRO" id="PR:P76136"/>
<dbReference type="Proteomes" id="UP000000625">
    <property type="component" value="Chromosome"/>
</dbReference>
<dbReference type="GO" id="GO:0005886">
    <property type="term" value="C:plasma membrane"/>
    <property type="evidence" value="ECO:0000314"/>
    <property type="project" value="EcoCyc"/>
</dbReference>
<dbReference type="GO" id="GO:0010447">
    <property type="term" value="P:response to acidic pH"/>
    <property type="evidence" value="ECO:0000270"/>
    <property type="project" value="EcoCyc"/>
</dbReference>
<dbReference type="InterPro" id="IPR031411">
    <property type="entry name" value="SafA"/>
</dbReference>
<dbReference type="Pfam" id="PF17073">
    <property type="entry name" value="SafA"/>
    <property type="match status" value="1"/>
</dbReference>
<proteinExistence type="evidence at protein level"/>
<organism>
    <name type="scientific">Escherichia coli (strain K12)</name>
    <dbReference type="NCBI Taxonomy" id="83333"/>
    <lineage>
        <taxon>Bacteria</taxon>
        <taxon>Pseudomonadati</taxon>
        <taxon>Pseudomonadota</taxon>
        <taxon>Gammaproteobacteria</taxon>
        <taxon>Enterobacterales</taxon>
        <taxon>Enterobacteriaceae</taxon>
        <taxon>Escherichia</taxon>
    </lineage>
</organism>
<name>SAFA_ECOLI</name>